<organism>
    <name type="scientific">Xenopus laevis</name>
    <name type="common">African clawed frog</name>
    <dbReference type="NCBI Taxonomy" id="8355"/>
    <lineage>
        <taxon>Eukaryota</taxon>
        <taxon>Metazoa</taxon>
        <taxon>Chordata</taxon>
        <taxon>Craniata</taxon>
        <taxon>Vertebrata</taxon>
        <taxon>Euteleostomi</taxon>
        <taxon>Amphibia</taxon>
        <taxon>Batrachia</taxon>
        <taxon>Anura</taxon>
        <taxon>Pipoidea</taxon>
        <taxon>Pipidae</taxon>
        <taxon>Xenopodinae</taxon>
        <taxon>Xenopus</taxon>
        <taxon>Xenopus</taxon>
    </lineage>
</organism>
<proteinExistence type="evidence at transcript level"/>
<name>STABP_XENLA</name>
<feature type="chain" id="PRO_0000194873" description="STAM-binding protein-like">
    <location>
        <begin position="1"/>
        <end position="416"/>
    </location>
</feature>
<feature type="domain" description="MPN" evidence="4">
    <location>
        <begin position="249"/>
        <end position="380"/>
    </location>
</feature>
<feature type="region of interest" description="Disordered" evidence="5">
    <location>
        <begin position="214"/>
        <end position="244"/>
    </location>
</feature>
<feature type="short sequence motif" description="JAMM motif" evidence="4">
    <location>
        <begin position="327"/>
        <end position="340"/>
    </location>
</feature>
<feature type="compositionally biased region" description="Low complexity" evidence="5">
    <location>
        <begin position="230"/>
        <end position="243"/>
    </location>
</feature>
<feature type="binding site" evidence="4">
    <location>
        <position position="327"/>
    </location>
    <ligand>
        <name>Zn(2+)</name>
        <dbReference type="ChEBI" id="CHEBI:29105"/>
        <label>1</label>
        <note>catalytic</note>
    </ligand>
</feature>
<feature type="binding site" evidence="4">
    <location>
        <position position="329"/>
    </location>
    <ligand>
        <name>Zn(2+)</name>
        <dbReference type="ChEBI" id="CHEBI:29105"/>
        <label>1</label>
        <note>catalytic</note>
    </ligand>
</feature>
<feature type="binding site" evidence="4">
    <location>
        <position position="340"/>
    </location>
    <ligand>
        <name>Zn(2+)</name>
        <dbReference type="ChEBI" id="CHEBI:29105"/>
        <label>1</label>
        <note>catalytic</note>
    </ligand>
</feature>
<feature type="binding site" evidence="3">
    <location>
        <position position="342"/>
    </location>
    <ligand>
        <name>Zn(2+)</name>
        <dbReference type="ChEBI" id="CHEBI:29105"/>
        <label>2</label>
    </ligand>
</feature>
<feature type="binding site" evidence="3">
    <location>
        <position position="382"/>
    </location>
    <ligand>
        <name>Zn(2+)</name>
        <dbReference type="ChEBI" id="CHEBI:29105"/>
        <label>2</label>
    </ligand>
</feature>
<feature type="binding site" evidence="3">
    <location>
        <position position="388"/>
    </location>
    <ligand>
        <name>Zn(2+)</name>
        <dbReference type="ChEBI" id="CHEBI:29105"/>
        <label>2</label>
    </ligand>
</feature>
<feature type="binding site" evidence="3">
    <location>
        <position position="390"/>
    </location>
    <ligand>
        <name>Zn(2+)</name>
        <dbReference type="ChEBI" id="CHEBI:29105"/>
        <label>2</label>
    </ligand>
</feature>
<feature type="site" description="Indirect zinc-binding" evidence="3">
    <location>
        <position position="272"/>
    </location>
</feature>
<protein>
    <recommendedName>
        <fullName>STAM-binding protein-like</fullName>
        <ecNumber>3.4.19.-</ecNumber>
    </recommendedName>
</protein>
<evidence type="ECO:0000250" key="1">
    <source>
        <dbReference type="UniProtKB" id="O35864"/>
    </source>
</evidence>
<evidence type="ECO:0000250" key="2">
    <source>
        <dbReference type="UniProtKB" id="O95630"/>
    </source>
</evidence>
<evidence type="ECO:0000250" key="3">
    <source>
        <dbReference type="UniProtKB" id="Q96FJ0"/>
    </source>
</evidence>
<evidence type="ECO:0000255" key="4">
    <source>
        <dbReference type="PROSITE-ProRule" id="PRU01182"/>
    </source>
</evidence>
<evidence type="ECO:0000256" key="5">
    <source>
        <dbReference type="SAM" id="MobiDB-lite"/>
    </source>
</evidence>
<evidence type="ECO:0000305" key="6"/>
<keyword id="KW-0378">Hydrolase</keyword>
<keyword id="KW-0479">Metal-binding</keyword>
<keyword id="KW-0482">Metalloprotease</keyword>
<keyword id="KW-0645">Protease</keyword>
<keyword id="KW-1185">Reference proteome</keyword>
<keyword id="KW-0833">Ubl conjugation pathway</keyword>
<keyword id="KW-0862">Zinc</keyword>
<accession>Q63ZM7</accession>
<comment type="function">
    <text evidence="2">Zinc metalloprotease that specifically cleaves 'Lys-63'-linked polyubiquitin chains. Does not cleave 'Lys-48'-linked polyubiquitin chains (By similarity). Functions at the endosome and is able to oppose the ubiquitin-dependent sorting of receptors to lysosomes (By similarity).</text>
</comment>
<comment type="cofactor">
    <cofactor evidence="1">
        <name>Zn(2+)</name>
        <dbReference type="ChEBI" id="CHEBI:29105"/>
    </cofactor>
    <text evidence="1">Binds 2 Zn(2+) ions per subunit.</text>
</comment>
<comment type="domain">
    <text evidence="1">The JAMM motif is essential for the protease activity.</text>
</comment>
<comment type="similarity">
    <text evidence="6">Belongs to the peptidase M67C family.</text>
</comment>
<sequence>MPEHSDASLPPEERIRALVLKGTSVEVNDDIPPKRYYRSGVELIRMANVYSGEGSIENAFILYNKYITLFIEKLPKHRDYKTANVPEKKETLKKLKEIAFPKAEELKKELHKRYKKEYEEYSEKQRKEEEERARRLALQQQLDAEKQRVALLKQQQEQQEQVQAFEEMMRRKELEAERLRILHQFSKDEPEAEPLGSPLIPGMNEPPVTPLLPSYGTVQPHPPAVDRSLKPSSYGSNSSGVTSDGLRHVKIPRDVCCKFLQLSENNTQRGVETCGILCGKLLQNEFTVTHVIVPKQSGGPDYCNTESEEELFLIQDQQGLITLGWIHTHPTQTAFLSSVDLHTHCSYQMMLPESIAIVCSPKFQETGFFKLTDYGMKEIGECRQKGFHPHCKEPPLFSAGGHVSVTEQDVTMMDLR</sequence>
<gene>
    <name type="primary">stambp</name>
</gene>
<dbReference type="EC" id="3.4.19.-"/>
<dbReference type="EMBL" id="BC082885">
    <property type="protein sequence ID" value="AAH82885.1"/>
    <property type="molecule type" value="mRNA"/>
</dbReference>
<dbReference type="RefSeq" id="NP_001088078.1">
    <property type="nucleotide sequence ID" value="NM_001094609.1"/>
</dbReference>
<dbReference type="SMR" id="Q63ZM7"/>
<dbReference type="BioGRID" id="104855">
    <property type="interactions" value="1"/>
</dbReference>
<dbReference type="MEROPS" id="M67.006"/>
<dbReference type="DNASU" id="494775"/>
<dbReference type="GeneID" id="494775"/>
<dbReference type="KEGG" id="xla:494775"/>
<dbReference type="AGR" id="Xenbase:XB-GENE-5926903"/>
<dbReference type="CTD" id="494775"/>
<dbReference type="Xenbase" id="XB-GENE-5926903">
    <property type="gene designation" value="stambp.L"/>
</dbReference>
<dbReference type="OrthoDB" id="3640at2759"/>
<dbReference type="Proteomes" id="UP000186698">
    <property type="component" value="Chromosome 3L"/>
</dbReference>
<dbReference type="Bgee" id="494775">
    <property type="expression patterns" value="Expressed in blastula and 19 other cell types or tissues"/>
</dbReference>
<dbReference type="GO" id="GO:0032154">
    <property type="term" value="C:cleavage furrow"/>
    <property type="evidence" value="ECO:0000318"/>
    <property type="project" value="GO_Central"/>
</dbReference>
<dbReference type="GO" id="GO:0005768">
    <property type="term" value="C:endosome"/>
    <property type="evidence" value="ECO:0000318"/>
    <property type="project" value="GO_Central"/>
</dbReference>
<dbReference type="GO" id="GO:0061578">
    <property type="term" value="F:K63-linked deubiquitinase activity"/>
    <property type="evidence" value="ECO:0000250"/>
    <property type="project" value="UniProtKB"/>
</dbReference>
<dbReference type="GO" id="GO:0046872">
    <property type="term" value="F:metal ion binding"/>
    <property type="evidence" value="ECO:0007669"/>
    <property type="project" value="UniProtKB-KW"/>
</dbReference>
<dbReference type="GO" id="GO:0140492">
    <property type="term" value="F:metal-dependent deubiquitinase activity"/>
    <property type="evidence" value="ECO:0007669"/>
    <property type="project" value="InterPro"/>
</dbReference>
<dbReference type="GO" id="GO:0046580">
    <property type="term" value="P:negative regulation of Ras protein signal transduction"/>
    <property type="evidence" value="ECO:0000318"/>
    <property type="project" value="GO_Central"/>
</dbReference>
<dbReference type="GO" id="GO:0070536">
    <property type="term" value="P:protein K63-linked deubiquitination"/>
    <property type="evidence" value="ECO:0007669"/>
    <property type="project" value="InterPro"/>
</dbReference>
<dbReference type="GO" id="GO:0006508">
    <property type="term" value="P:proteolysis"/>
    <property type="evidence" value="ECO:0007669"/>
    <property type="project" value="UniProtKB-KW"/>
</dbReference>
<dbReference type="CDD" id="cd08066">
    <property type="entry name" value="MPN_AMSH_like"/>
    <property type="match status" value="1"/>
</dbReference>
<dbReference type="FunFam" id="3.40.140.10:FF:000010">
    <property type="entry name" value="AMSH-like protease isoform X1"/>
    <property type="match status" value="1"/>
</dbReference>
<dbReference type="FunFam" id="1.20.58.80:FF:000013">
    <property type="entry name" value="STAM-binding protein-like A"/>
    <property type="match status" value="1"/>
</dbReference>
<dbReference type="Gene3D" id="3.40.140.10">
    <property type="entry name" value="Cytidine Deaminase, domain 2"/>
    <property type="match status" value="1"/>
</dbReference>
<dbReference type="Gene3D" id="1.20.58.80">
    <property type="entry name" value="Phosphotransferase system, lactose/cellobiose-type IIA subunit"/>
    <property type="match status" value="1"/>
</dbReference>
<dbReference type="InterPro" id="IPR000555">
    <property type="entry name" value="JAMM/MPN+_dom"/>
</dbReference>
<dbReference type="InterPro" id="IPR037518">
    <property type="entry name" value="MPN"/>
</dbReference>
<dbReference type="InterPro" id="IPR044098">
    <property type="entry name" value="STAMBP/STALP-like_MPN"/>
</dbReference>
<dbReference type="InterPro" id="IPR015063">
    <property type="entry name" value="USP8_dimer"/>
</dbReference>
<dbReference type="PANTHER" id="PTHR12947">
    <property type="entry name" value="AMSH-LIKE PROTEASE"/>
    <property type="match status" value="1"/>
</dbReference>
<dbReference type="PANTHER" id="PTHR12947:SF8">
    <property type="entry name" value="STAM-BINDING PROTEIN"/>
    <property type="match status" value="1"/>
</dbReference>
<dbReference type="Pfam" id="PF01398">
    <property type="entry name" value="JAB"/>
    <property type="match status" value="1"/>
</dbReference>
<dbReference type="Pfam" id="PF08969">
    <property type="entry name" value="USP8_dimer"/>
    <property type="match status" value="1"/>
</dbReference>
<dbReference type="SMART" id="SM00232">
    <property type="entry name" value="JAB_MPN"/>
    <property type="match status" value="1"/>
</dbReference>
<dbReference type="SUPFAM" id="SSF102712">
    <property type="entry name" value="JAB1/MPN domain"/>
    <property type="match status" value="1"/>
</dbReference>
<dbReference type="SUPFAM" id="SSF140856">
    <property type="entry name" value="USP8 N-terminal domain-like"/>
    <property type="match status" value="1"/>
</dbReference>
<dbReference type="PROSITE" id="PS50249">
    <property type="entry name" value="MPN"/>
    <property type="match status" value="1"/>
</dbReference>
<reference key="1">
    <citation type="submission" date="2004-05" db="EMBL/GenBank/DDBJ databases">
        <authorList>
            <consortium name="NIH - Xenopus Gene Collection (XGC) project"/>
        </authorList>
    </citation>
    <scope>NUCLEOTIDE SEQUENCE [LARGE SCALE MRNA]</scope>
    <source>
        <tissue>Brain</tissue>
    </source>
</reference>